<dbReference type="EC" id="5.4.2.10" evidence="1"/>
<dbReference type="EMBL" id="CP000679">
    <property type="protein sequence ID" value="ABP66230.1"/>
    <property type="molecule type" value="Genomic_DNA"/>
</dbReference>
<dbReference type="RefSeq" id="WP_011916177.1">
    <property type="nucleotide sequence ID" value="NC_009437.1"/>
</dbReference>
<dbReference type="SMR" id="A4XH45"/>
<dbReference type="STRING" id="351627.Csac_0605"/>
<dbReference type="KEGG" id="csc:Csac_0605"/>
<dbReference type="eggNOG" id="COG1109">
    <property type="taxonomic scope" value="Bacteria"/>
</dbReference>
<dbReference type="HOGENOM" id="CLU_016950_7_0_9"/>
<dbReference type="OrthoDB" id="9806956at2"/>
<dbReference type="Proteomes" id="UP000000256">
    <property type="component" value="Chromosome"/>
</dbReference>
<dbReference type="GO" id="GO:0005829">
    <property type="term" value="C:cytosol"/>
    <property type="evidence" value="ECO:0007669"/>
    <property type="project" value="TreeGrafter"/>
</dbReference>
<dbReference type="GO" id="GO:0000287">
    <property type="term" value="F:magnesium ion binding"/>
    <property type="evidence" value="ECO:0007669"/>
    <property type="project" value="UniProtKB-UniRule"/>
</dbReference>
<dbReference type="GO" id="GO:0008966">
    <property type="term" value="F:phosphoglucosamine mutase activity"/>
    <property type="evidence" value="ECO:0007669"/>
    <property type="project" value="UniProtKB-UniRule"/>
</dbReference>
<dbReference type="GO" id="GO:0004615">
    <property type="term" value="F:phosphomannomutase activity"/>
    <property type="evidence" value="ECO:0007669"/>
    <property type="project" value="TreeGrafter"/>
</dbReference>
<dbReference type="GO" id="GO:0005975">
    <property type="term" value="P:carbohydrate metabolic process"/>
    <property type="evidence" value="ECO:0007669"/>
    <property type="project" value="InterPro"/>
</dbReference>
<dbReference type="GO" id="GO:0009252">
    <property type="term" value="P:peptidoglycan biosynthetic process"/>
    <property type="evidence" value="ECO:0007669"/>
    <property type="project" value="TreeGrafter"/>
</dbReference>
<dbReference type="GO" id="GO:0006048">
    <property type="term" value="P:UDP-N-acetylglucosamine biosynthetic process"/>
    <property type="evidence" value="ECO:0007669"/>
    <property type="project" value="TreeGrafter"/>
</dbReference>
<dbReference type="CDD" id="cd05802">
    <property type="entry name" value="GlmM"/>
    <property type="match status" value="1"/>
</dbReference>
<dbReference type="FunFam" id="3.30.310.50:FF:000001">
    <property type="entry name" value="Phosphoglucosamine mutase"/>
    <property type="match status" value="1"/>
</dbReference>
<dbReference type="FunFam" id="3.40.120.10:FF:000001">
    <property type="entry name" value="Phosphoglucosamine mutase"/>
    <property type="match status" value="1"/>
</dbReference>
<dbReference type="FunFam" id="3.40.120.10:FF:000003">
    <property type="entry name" value="Phosphoglucosamine mutase"/>
    <property type="match status" value="1"/>
</dbReference>
<dbReference type="Gene3D" id="3.40.120.10">
    <property type="entry name" value="Alpha-D-Glucose-1,6-Bisphosphate, subunit A, domain 3"/>
    <property type="match status" value="3"/>
</dbReference>
<dbReference type="Gene3D" id="3.30.310.50">
    <property type="entry name" value="Alpha-D-phosphohexomutase, C-terminal domain"/>
    <property type="match status" value="1"/>
</dbReference>
<dbReference type="HAMAP" id="MF_01554_B">
    <property type="entry name" value="GlmM_B"/>
    <property type="match status" value="1"/>
</dbReference>
<dbReference type="InterPro" id="IPR005844">
    <property type="entry name" value="A-D-PHexomutase_a/b/a-I"/>
</dbReference>
<dbReference type="InterPro" id="IPR016055">
    <property type="entry name" value="A-D-PHexomutase_a/b/a-I/II/III"/>
</dbReference>
<dbReference type="InterPro" id="IPR005845">
    <property type="entry name" value="A-D-PHexomutase_a/b/a-II"/>
</dbReference>
<dbReference type="InterPro" id="IPR005846">
    <property type="entry name" value="A-D-PHexomutase_a/b/a-III"/>
</dbReference>
<dbReference type="InterPro" id="IPR005843">
    <property type="entry name" value="A-D-PHexomutase_C"/>
</dbReference>
<dbReference type="InterPro" id="IPR036900">
    <property type="entry name" value="A-D-PHexomutase_C_sf"/>
</dbReference>
<dbReference type="InterPro" id="IPR016066">
    <property type="entry name" value="A-D-PHexomutase_CS"/>
</dbReference>
<dbReference type="InterPro" id="IPR005841">
    <property type="entry name" value="Alpha-D-phosphohexomutase_SF"/>
</dbReference>
<dbReference type="InterPro" id="IPR006352">
    <property type="entry name" value="GlmM_bact"/>
</dbReference>
<dbReference type="InterPro" id="IPR050060">
    <property type="entry name" value="Phosphoglucosamine_mutase"/>
</dbReference>
<dbReference type="NCBIfam" id="TIGR01455">
    <property type="entry name" value="glmM"/>
    <property type="match status" value="1"/>
</dbReference>
<dbReference type="NCBIfam" id="NF008139">
    <property type="entry name" value="PRK10887.1"/>
    <property type="match status" value="1"/>
</dbReference>
<dbReference type="PANTHER" id="PTHR42946:SF1">
    <property type="entry name" value="PHOSPHOGLUCOMUTASE (ALPHA-D-GLUCOSE-1,6-BISPHOSPHATE-DEPENDENT)"/>
    <property type="match status" value="1"/>
</dbReference>
<dbReference type="PANTHER" id="PTHR42946">
    <property type="entry name" value="PHOSPHOHEXOSE MUTASE"/>
    <property type="match status" value="1"/>
</dbReference>
<dbReference type="Pfam" id="PF02878">
    <property type="entry name" value="PGM_PMM_I"/>
    <property type="match status" value="1"/>
</dbReference>
<dbReference type="Pfam" id="PF02879">
    <property type="entry name" value="PGM_PMM_II"/>
    <property type="match status" value="1"/>
</dbReference>
<dbReference type="Pfam" id="PF02880">
    <property type="entry name" value="PGM_PMM_III"/>
    <property type="match status" value="1"/>
</dbReference>
<dbReference type="Pfam" id="PF00408">
    <property type="entry name" value="PGM_PMM_IV"/>
    <property type="match status" value="1"/>
</dbReference>
<dbReference type="PRINTS" id="PR00509">
    <property type="entry name" value="PGMPMM"/>
</dbReference>
<dbReference type="SUPFAM" id="SSF55957">
    <property type="entry name" value="Phosphoglucomutase, C-terminal domain"/>
    <property type="match status" value="1"/>
</dbReference>
<dbReference type="SUPFAM" id="SSF53738">
    <property type="entry name" value="Phosphoglucomutase, first 3 domains"/>
    <property type="match status" value="3"/>
</dbReference>
<dbReference type="PROSITE" id="PS00710">
    <property type="entry name" value="PGM_PMM"/>
    <property type="match status" value="1"/>
</dbReference>
<protein>
    <recommendedName>
        <fullName evidence="1">Phosphoglucosamine mutase</fullName>
        <ecNumber evidence="1">5.4.2.10</ecNumber>
    </recommendedName>
</protein>
<feature type="chain" id="PRO_1000068894" description="Phosphoglucosamine mutase">
    <location>
        <begin position="1"/>
        <end position="449"/>
    </location>
</feature>
<feature type="active site" description="Phosphoserine intermediate" evidence="1">
    <location>
        <position position="100"/>
    </location>
</feature>
<feature type="binding site" description="via phosphate group" evidence="1">
    <location>
        <position position="100"/>
    </location>
    <ligand>
        <name>Mg(2+)</name>
        <dbReference type="ChEBI" id="CHEBI:18420"/>
    </ligand>
</feature>
<feature type="binding site" evidence="1">
    <location>
        <position position="241"/>
    </location>
    <ligand>
        <name>Mg(2+)</name>
        <dbReference type="ChEBI" id="CHEBI:18420"/>
    </ligand>
</feature>
<feature type="binding site" evidence="1">
    <location>
        <position position="243"/>
    </location>
    <ligand>
        <name>Mg(2+)</name>
        <dbReference type="ChEBI" id="CHEBI:18420"/>
    </ligand>
</feature>
<feature type="binding site" evidence="1">
    <location>
        <position position="245"/>
    </location>
    <ligand>
        <name>Mg(2+)</name>
        <dbReference type="ChEBI" id="CHEBI:18420"/>
    </ligand>
</feature>
<feature type="modified residue" description="Phosphoserine" evidence="1">
    <location>
        <position position="100"/>
    </location>
</feature>
<reference key="1">
    <citation type="submission" date="2007-04" db="EMBL/GenBank/DDBJ databases">
        <title>Genome sequence of the thermophilic hydrogen-producing bacterium Caldicellulosiruptor saccharolyticus DSM 8903.</title>
        <authorList>
            <person name="Copeland A."/>
            <person name="Lucas S."/>
            <person name="Lapidus A."/>
            <person name="Barry K."/>
            <person name="Detter J.C."/>
            <person name="Glavina del Rio T."/>
            <person name="Hammon N."/>
            <person name="Israni S."/>
            <person name="Dalin E."/>
            <person name="Tice H."/>
            <person name="Pitluck S."/>
            <person name="Kiss H."/>
            <person name="Brettin T."/>
            <person name="Bruce D."/>
            <person name="Han C."/>
            <person name="Schmutz J."/>
            <person name="Larimer F."/>
            <person name="Land M."/>
            <person name="Hauser L."/>
            <person name="Kyrpides N."/>
            <person name="Lykidis A."/>
            <person name="van de Werken H.J.G."/>
            <person name="Verhaart M.R.A."/>
            <person name="VanFossen A.L."/>
            <person name="Lewis D.L."/>
            <person name="Nichols J.D."/>
            <person name="Goorissen H.P."/>
            <person name="van Niel E.W.J."/>
            <person name="Stams F.J.M."/>
            <person name="Willquist K.U."/>
            <person name="Ward D.E."/>
            <person name="van der Oost J."/>
            <person name="Kelly R.M."/>
            <person name="Kengen S.M.W."/>
            <person name="Richardson P."/>
        </authorList>
    </citation>
    <scope>NUCLEOTIDE SEQUENCE [LARGE SCALE GENOMIC DNA]</scope>
    <source>
        <strain>ATCC 43494 / DSM 8903 / Tp8T 6331</strain>
    </source>
</reference>
<evidence type="ECO:0000255" key="1">
    <source>
        <dbReference type="HAMAP-Rule" id="MF_01554"/>
    </source>
</evidence>
<comment type="function">
    <text evidence="1">Catalyzes the conversion of glucosamine-6-phosphate to glucosamine-1-phosphate.</text>
</comment>
<comment type="catalytic activity">
    <reaction evidence="1">
        <text>alpha-D-glucosamine 1-phosphate = D-glucosamine 6-phosphate</text>
        <dbReference type="Rhea" id="RHEA:23424"/>
        <dbReference type="ChEBI" id="CHEBI:58516"/>
        <dbReference type="ChEBI" id="CHEBI:58725"/>
        <dbReference type="EC" id="5.4.2.10"/>
    </reaction>
</comment>
<comment type="cofactor">
    <cofactor evidence="1">
        <name>Mg(2+)</name>
        <dbReference type="ChEBI" id="CHEBI:18420"/>
    </cofactor>
    <text evidence="1">Binds 1 Mg(2+) ion per subunit.</text>
</comment>
<comment type="PTM">
    <text evidence="1">Activated by phosphorylation.</text>
</comment>
<comment type="similarity">
    <text evidence="1">Belongs to the phosphohexose mutase family.</text>
</comment>
<name>GLMM_CALS8</name>
<gene>
    <name evidence="1" type="primary">glmM</name>
    <name type="ordered locus">Csac_0605</name>
</gene>
<keyword id="KW-0413">Isomerase</keyword>
<keyword id="KW-0460">Magnesium</keyword>
<keyword id="KW-0479">Metal-binding</keyword>
<keyword id="KW-0597">Phosphoprotein</keyword>
<organism>
    <name type="scientific">Caldicellulosiruptor saccharolyticus (strain ATCC 43494 / DSM 8903 / Tp8T 6331)</name>
    <dbReference type="NCBI Taxonomy" id="351627"/>
    <lineage>
        <taxon>Bacteria</taxon>
        <taxon>Bacillati</taxon>
        <taxon>Bacillota</taxon>
        <taxon>Bacillota incertae sedis</taxon>
        <taxon>Caldicellulosiruptorales</taxon>
        <taxon>Caldicellulosiruptoraceae</taxon>
        <taxon>Caldicellulosiruptor</taxon>
    </lineage>
</organism>
<accession>A4XH45</accession>
<proteinExistence type="inferred from homology"/>
<sequence length="449" mass="48998">MGKLFGTDGVRGVANKELTCELAFDLGRAGAYVLTETKQKPKILIGKDTRISCDMLEAALCAGLTSVGADVYLAGVITTPAIAHLVKSHGFDAGIMISASHNPYEFNGIKFFNSQGFKLSDQIEEKIEDIILNKKWDEVPHAQFDAIGRINRVELKKDYQEYLKSTLNAASFKGFKIVIDCANGAASAIAPEVFEDLGAEVVVINNQPDGTNINKNCGSTHLQALQEEVVKNKADFGIAYDGDADRTLFVDEEGNTVDGDKIMLLLAQNLKQQGRLKRNTLVVTVMSNMGLFVAAKELGINLEVTKVGDRYVLEKLLEGGYSIGGEQSGHIILLDYATTGDGILTSLQLTKLIRESGKKLSELGKIMKVYPQVLVNAKVENGKKDLYSKDPVILEAIKKVEEKLNGKGRVLIRPSGTEPLIRVMIEGEDYEEIKKDADNLASLIESRLS</sequence>